<proteinExistence type="evidence at protein level"/>
<keyword id="KW-0027">Amidation</keyword>
<keyword id="KW-0903">Direct protein sequencing</keyword>
<keyword id="KW-0527">Neuropeptide</keyword>
<keyword id="KW-0964">Secreted</keyword>
<sequence>GSSGMIPFPRV</sequence>
<accession>P84662</accession>
<feature type="peptide" id="PRO_0000044289" description="Periviscerokinin-3">
    <location>
        <begin position="1"/>
        <end position="11"/>
    </location>
</feature>
<feature type="modified residue" description="Valine amide" evidence="2">
    <location>
        <position position="11"/>
    </location>
</feature>
<evidence type="ECO:0000255" key="1"/>
<evidence type="ECO:0000269" key="2">
    <source ref="1"/>
</evidence>
<evidence type="ECO:0000305" key="3"/>
<organism>
    <name type="scientific">Panchlora viridis</name>
    <name type="common">Cockroach</name>
    <dbReference type="NCBI Taxonomy" id="344693"/>
    <lineage>
        <taxon>Eukaryota</taxon>
        <taxon>Metazoa</taxon>
        <taxon>Ecdysozoa</taxon>
        <taxon>Arthropoda</taxon>
        <taxon>Hexapoda</taxon>
        <taxon>Insecta</taxon>
        <taxon>Pterygota</taxon>
        <taxon>Neoptera</taxon>
        <taxon>Polyneoptera</taxon>
        <taxon>Dictyoptera</taxon>
        <taxon>Blattodea</taxon>
        <taxon>Blaberoidea</taxon>
        <taxon>Blaberidae</taxon>
        <taxon>Panchlorinae</taxon>
        <taxon>Panchlora</taxon>
    </lineage>
</organism>
<dbReference type="GO" id="GO:0005576">
    <property type="term" value="C:extracellular region"/>
    <property type="evidence" value="ECO:0007669"/>
    <property type="project" value="UniProtKB-SubCell"/>
</dbReference>
<dbReference type="GO" id="GO:0007218">
    <property type="term" value="P:neuropeptide signaling pathway"/>
    <property type="evidence" value="ECO:0007669"/>
    <property type="project" value="UniProtKB-KW"/>
</dbReference>
<dbReference type="InterPro" id="IPR013231">
    <property type="entry name" value="Periviscerokinin"/>
</dbReference>
<dbReference type="Pfam" id="PF08259">
    <property type="entry name" value="Periviscerokin"/>
    <property type="match status" value="1"/>
</dbReference>
<reference evidence="3" key="1">
    <citation type="submission" date="2005-09" db="UniProtKB">
        <authorList>
            <person name="Predel R."/>
        </authorList>
    </citation>
    <scope>PROTEIN SEQUENCE</scope>
    <scope>TISSUE SPECIFICITY</scope>
    <scope>MASS SPECTROMETRY</scope>
    <scope>AMIDATION AT VAL-11</scope>
    <source>
        <tissue>Abdominal perisympathetic organs</tissue>
    </source>
</reference>
<name>PVK3_PANVI</name>
<protein>
    <recommendedName>
        <fullName>Periviscerokinin-3</fullName>
    </recommendedName>
    <alternativeName>
        <fullName>Panvi-PVK-3</fullName>
    </alternativeName>
</protein>
<comment type="function">
    <text evidence="3">Mediates visceral muscle contractile activity (myotropic activity).</text>
</comment>
<comment type="subcellular location">
    <subcellularLocation>
        <location evidence="3">Secreted</location>
    </subcellularLocation>
</comment>
<comment type="tissue specificity">
    <text evidence="2">Expressed in abdominal perisympathetic organs and abdominal ganglia.</text>
</comment>
<comment type="mass spectrometry">
    <text>With amidation.</text>
</comment>
<comment type="similarity">
    <text evidence="1">Belongs to the periviscerokinin family.</text>
</comment>